<gene>
    <name type="primary">OR7E24</name>
    <name type="synonym">OR7E24P</name>
</gene>
<organism>
    <name type="scientific">Homo sapiens</name>
    <name type="common">Human</name>
    <dbReference type="NCBI Taxonomy" id="9606"/>
    <lineage>
        <taxon>Eukaryota</taxon>
        <taxon>Metazoa</taxon>
        <taxon>Chordata</taxon>
        <taxon>Craniata</taxon>
        <taxon>Vertebrata</taxon>
        <taxon>Euteleostomi</taxon>
        <taxon>Mammalia</taxon>
        <taxon>Eutheria</taxon>
        <taxon>Euarchontoglires</taxon>
        <taxon>Primates</taxon>
        <taxon>Haplorrhini</taxon>
        <taxon>Catarrhini</taxon>
        <taxon>Hominidae</taxon>
        <taxon>Homo</taxon>
    </lineage>
</organism>
<feature type="chain" id="PRO_0000281642" description="Olfactory receptor 7E24">
    <location>
        <begin position="1"/>
        <end position="339"/>
    </location>
</feature>
<feature type="topological domain" description="Extracellular" evidence="1">
    <location>
        <begin position="1"/>
        <end position="43"/>
    </location>
</feature>
<feature type="transmembrane region" description="Helical; Name=1" evidence="1">
    <location>
        <begin position="44"/>
        <end position="64"/>
    </location>
</feature>
<feature type="topological domain" description="Cytoplasmic" evidence="1">
    <location>
        <begin position="65"/>
        <end position="72"/>
    </location>
</feature>
<feature type="transmembrane region" description="Helical; Name=2" evidence="1">
    <location>
        <begin position="73"/>
        <end position="93"/>
    </location>
</feature>
<feature type="topological domain" description="Extracellular" evidence="1">
    <location>
        <begin position="94"/>
        <end position="117"/>
    </location>
</feature>
<feature type="transmembrane region" description="Helical; Name=3" evidence="1">
    <location>
        <begin position="118"/>
        <end position="138"/>
    </location>
</feature>
<feature type="topological domain" description="Cytoplasmic" evidence="1">
    <location>
        <begin position="139"/>
        <end position="157"/>
    </location>
</feature>
<feature type="transmembrane region" description="Helical; Name=4" evidence="1">
    <location>
        <begin position="158"/>
        <end position="178"/>
    </location>
</feature>
<feature type="topological domain" description="Extracellular" evidence="1">
    <location>
        <begin position="179"/>
        <end position="215"/>
    </location>
</feature>
<feature type="transmembrane region" description="Helical; Name=5" evidence="1">
    <location>
        <begin position="216"/>
        <end position="235"/>
    </location>
</feature>
<feature type="topological domain" description="Cytoplasmic" evidence="1">
    <location>
        <begin position="236"/>
        <end position="255"/>
    </location>
</feature>
<feature type="transmembrane region" description="Helical; Name=6" evidence="1">
    <location>
        <begin position="256"/>
        <end position="276"/>
    </location>
</feature>
<feature type="topological domain" description="Extracellular" evidence="1">
    <location>
        <begin position="277"/>
        <end position="289"/>
    </location>
</feature>
<feature type="transmembrane region" description="Helical; Name=7" evidence="1">
    <location>
        <begin position="290"/>
        <end position="310"/>
    </location>
</feature>
<feature type="topological domain" description="Cytoplasmic" evidence="1">
    <location>
        <begin position="311"/>
        <end position="339"/>
    </location>
</feature>
<feature type="glycosylation site" description="N-linked (GlcNAc...) asparagine" evidence="1">
    <location>
        <position position="23"/>
    </location>
</feature>
<feature type="disulfide bond" evidence="2">
    <location>
        <begin position="115"/>
        <end position="207"/>
    </location>
</feature>
<feature type="sequence variant" id="VAR_053236" description="In dbSNP:rs12980833.">
    <original>S</original>
    <variation>F</variation>
    <location>
        <position position="193"/>
    </location>
</feature>
<feature type="sequence variant" id="VAR_053237" description="In dbSNP:rs2240928.">
    <original>P</original>
    <variation>S</variation>
    <location>
        <position position="242"/>
    </location>
</feature>
<dbReference type="EMBL" id="AC006271">
    <property type="protein sequence ID" value="AAD03353.1"/>
    <property type="status" value="ALT_SEQ"/>
    <property type="molecule type" value="Genomic_DNA"/>
</dbReference>
<dbReference type="EMBL" id="BC146920">
    <property type="protein sequence ID" value="AAI46921.1"/>
    <property type="molecule type" value="mRNA"/>
</dbReference>
<dbReference type="EMBL" id="BK004227">
    <property type="protein sequence ID" value="DAA04625.1"/>
    <property type="molecule type" value="Genomic_DNA"/>
</dbReference>
<dbReference type="CCDS" id="CCDS45955.1"/>
<dbReference type="RefSeq" id="NP_001073404.1">
    <property type="nucleotide sequence ID" value="NM_001079935.2"/>
</dbReference>
<dbReference type="SMR" id="Q6IFN5"/>
<dbReference type="BioGRID" id="117773">
    <property type="interactions" value="2"/>
</dbReference>
<dbReference type="FunCoup" id="Q6IFN5">
    <property type="interactions" value="459"/>
</dbReference>
<dbReference type="IntAct" id="Q6IFN5">
    <property type="interactions" value="1"/>
</dbReference>
<dbReference type="STRING" id="9606.ENSP00000387523"/>
<dbReference type="GlyCosmos" id="Q6IFN5">
    <property type="glycosylation" value="1 site, No reported glycans"/>
</dbReference>
<dbReference type="GlyGen" id="Q6IFN5">
    <property type="glycosylation" value="1 site"/>
</dbReference>
<dbReference type="iPTMnet" id="Q6IFN5"/>
<dbReference type="PhosphoSitePlus" id="Q6IFN5"/>
<dbReference type="BioMuta" id="OR7E24"/>
<dbReference type="DMDM" id="74757943"/>
<dbReference type="MassIVE" id="Q6IFN5"/>
<dbReference type="PaxDb" id="9606-ENSP00000387523"/>
<dbReference type="Antibodypedia" id="68428">
    <property type="antibodies" value="24 antibodies from 14 providers"/>
</dbReference>
<dbReference type="DNASU" id="26648"/>
<dbReference type="Ensembl" id="ENST00000456448.3">
    <property type="protein sequence ID" value="ENSP00000387523.1"/>
    <property type="gene ID" value="ENSG00000237521.4"/>
</dbReference>
<dbReference type="GeneID" id="26648"/>
<dbReference type="KEGG" id="hsa:26648"/>
<dbReference type="MANE-Select" id="ENST00000456448.3">
    <property type="protein sequence ID" value="ENSP00000387523.1"/>
    <property type="RefSeq nucleotide sequence ID" value="NM_001079935.2"/>
    <property type="RefSeq protein sequence ID" value="NP_001073404.1"/>
</dbReference>
<dbReference type="UCSC" id="uc002mlb.2">
    <property type="organism name" value="human"/>
</dbReference>
<dbReference type="AGR" id="HGNC:8396"/>
<dbReference type="CTD" id="26648"/>
<dbReference type="GeneCards" id="OR7E24"/>
<dbReference type="HGNC" id="HGNC:8396">
    <property type="gene designation" value="OR7E24"/>
</dbReference>
<dbReference type="HPA" id="ENSG00000237521">
    <property type="expression patterns" value="Tissue enriched (testis)"/>
</dbReference>
<dbReference type="neXtProt" id="NX_Q6IFN5"/>
<dbReference type="OpenTargets" id="ENSG00000237521"/>
<dbReference type="PharmGKB" id="PA32675"/>
<dbReference type="VEuPathDB" id="HostDB:ENSG00000237521"/>
<dbReference type="eggNOG" id="ENOG502T9MT">
    <property type="taxonomic scope" value="Eukaryota"/>
</dbReference>
<dbReference type="GeneTree" id="ENSGT00940000153277"/>
<dbReference type="HOGENOM" id="CLU_012526_1_0_1"/>
<dbReference type="InParanoid" id="Q6IFN5"/>
<dbReference type="OMA" id="SIIRMYN"/>
<dbReference type="OrthoDB" id="9523733at2759"/>
<dbReference type="PAN-GO" id="Q6IFN5">
    <property type="GO annotations" value="3 GO annotations based on evolutionary models"/>
</dbReference>
<dbReference type="PhylomeDB" id="Q6IFN5"/>
<dbReference type="TreeFam" id="TF337210"/>
<dbReference type="PathwayCommons" id="Q6IFN5"/>
<dbReference type="Reactome" id="R-HSA-9752946">
    <property type="pathway name" value="Expression and translocation of olfactory receptors"/>
</dbReference>
<dbReference type="BioGRID-ORCS" id="26648">
    <property type="hits" value="10 hits in 743 CRISPR screens"/>
</dbReference>
<dbReference type="GenomeRNAi" id="26648"/>
<dbReference type="Pharos" id="Q6IFN5">
    <property type="development level" value="Tdark"/>
</dbReference>
<dbReference type="PRO" id="PR:Q6IFN5"/>
<dbReference type="Proteomes" id="UP000005640">
    <property type="component" value="Chromosome 19"/>
</dbReference>
<dbReference type="RNAct" id="Q6IFN5">
    <property type="molecule type" value="protein"/>
</dbReference>
<dbReference type="Bgee" id="ENSG00000237521">
    <property type="expression patterns" value="Expressed in oocyte and 9 other cell types or tissues"/>
</dbReference>
<dbReference type="ExpressionAtlas" id="Q6IFN5">
    <property type="expression patterns" value="baseline and differential"/>
</dbReference>
<dbReference type="GO" id="GO:0005886">
    <property type="term" value="C:plasma membrane"/>
    <property type="evidence" value="ECO:0000318"/>
    <property type="project" value="GO_Central"/>
</dbReference>
<dbReference type="GO" id="GO:0004930">
    <property type="term" value="F:G protein-coupled receptor activity"/>
    <property type="evidence" value="ECO:0007669"/>
    <property type="project" value="UniProtKB-KW"/>
</dbReference>
<dbReference type="GO" id="GO:0004984">
    <property type="term" value="F:olfactory receptor activity"/>
    <property type="evidence" value="ECO:0000318"/>
    <property type="project" value="GO_Central"/>
</dbReference>
<dbReference type="GO" id="GO:0007165">
    <property type="term" value="P:signal transduction"/>
    <property type="evidence" value="ECO:0000318"/>
    <property type="project" value="GO_Central"/>
</dbReference>
<dbReference type="CDD" id="cd15234">
    <property type="entry name" value="7tmA_OR7-like"/>
    <property type="match status" value="1"/>
</dbReference>
<dbReference type="FunFam" id="1.20.1070.10:FF:000009">
    <property type="entry name" value="Olfactory receptor"/>
    <property type="match status" value="1"/>
</dbReference>
<dbReference type="Gene3D" id="1.20.1070.10">
    <property type="entry name" value="Rhodopsin 7-helix transmembrane proteins"/>
    <property type="match status" value="1"/>
</dbReference>
<dbReference type="InterPro" id="IPR000276">
    <property type="entry name" value="GPCR_Rhodpsn"/>
</dbReference>
<dbReference type="InterPro" id="IPR017452">
    <property type="entry name" value="GPCR_Rhodpsn_7TM"/>
</dbReference>
<dbReference type="InterPro" id="IPR000725">
    <property type="entry name" value="Olfact_rcpt"/>
</dbReference>
<dbReference type="PANTHER" id="PTHR48001">
    <property type="entry name" value="OLFACTORY RECEPTOR"/>
    <property type="match status" value="1"/>
</dbReference>
<dbReference type="Pfam" id="PF13853">
    <property type="entry name" value="7tm_4"/>
    <property type="match status" value="1"/>
</dbReference>
<dbReference type="PRINTS" id="PR00237">
    <property type="entry name" value="GPCRRHODOPSN"/>
</dbReference>
<dbReference type="PRINTS" id="PR00245">
    <property type="entry name" value="OLFACTORYR"/>
</dbReference>
<dbReference type="SUPFAM" id="SSF81321">
    <property type="entry name" value="Family A G protein-coupled receptor-like"/>
    <property type="match status" value="1"/>
</dbReference>
<dbReference type="PROSITE" id="PS50262">
    <property type="entry name" value="G_PROTEIN_RECEP_F1_2"/>
    <property type="match status" value="1"/>
</dbReference>
<comment type="function">
    <text evidence="3">Odorant receptor.</text>
</comment>
<comment type="subcellular location">
    <subcellularLocation>
        <location>Cell membrane</location>
        <topology>Multi-pass membrane protein</topology>
    </subcellularLocation>
</comment>
<comment type="similarity">
    <text evidence="2">Belongs to the G-protein coupled receptor 1 family.</text>
</comment>
<comment type="sequence caution" evidence="3">
    <conflict type="erroneous gene model prediction">
        <sequence resource="EMBL-CDS" id="AAD03353"/>
    </conflict>
</comment>
<comment type="online information" name="Human Olfactory Receptor Data Exploratorium (HORDE)">
    <link uri="http://genome.weizmann.ac.il/horde/card/index/symbol:OR7E24"/>
</comment>
<reference key="1">
    <citation type="journal article" date="2004" name="Nature">
        <title>The DNA sequence and biology of human chromosome 19.</title>
        <authorList>
            <person name="Grimwood J."/>
            <person name="Gordon L.A."/>
            <person name="Olsen A.S."/>
            <person name="Terry A."/>
            <person name="Schmutz J."/>
            <person name="Lamerdin J.E."/>
            <person name="Hellsten U."/>
            <person name="Goodstein D."/>
            <person name="Couronne O."/>
            <person name="Tran-Gyamfi M."/>
            <person name="Aerts A."/>
            <person name="Altherr M."/>
            <person name="Ashworth L."/>
            <person name="Bajorek E."/>
            <person name="Black S."/>
            <person name="Branscomb E."/>
            <person name="Caenepeel S."/>
            <person name="Carrano A.V."/>
            <person name="Caoile C."/>
            <person name="Chan Y.M."/>
            <person name="Christensen M."/>
            <person name="Cleland C.A."/>
            <person name="Copeland A."/>
            <person name="Dalin E."/>
            <person name="Dehal P."/>
            <person name="Denys M."/>
            <person name="Detter J.C."/>
            <person name="Escobar J."/>
            <person name="Flowers D."/>
            <person name="Fotopulos D."/>
            <person name="Garcia C."/>
            <person name="Georgescu A.M."/>
            <person name="Glavina T."/>
            <person name="Gomez M."/>
            <person name="Gonzales E."/>
            <person name="Groza M."/>
            <person name="Hammon N."/>
            <person name="Hawkins T."/>
            <person name="Haydu L."/>
            <person name="Ho I."/>
            <person name="Huang W."/>
            <person name="Israni S."/>
            <person name="Jett J."/>
            <person name="Kadner K."/>
            <person name="Kimball H."/>
            <person name="Kobayashi A."/>
            <person name="Larionov V."/>
            <person name="Leem S.-H."/>
            <person name="Lopez F."/>
            <person name="Lou Y."/>
            <person name="Lowry S."/>
            <person name="Malfatti S."/>
            <person name="Martinez D."/>
            <person name="McCready P.M."/>
            <person name="Medina C."/>
            <person name="Morgan J."/>
            <person name="Nelson K."/>
            <person name="Nolan M."/>
            <person name="Ovcharenko I."/>
            <person name="Pitluck S."/>
            <person name="Pollard M."/>
            <person name="Popkie A.P."/>
            <person name="Predki P."/>
            <person name="Quan G."/>
            <person name="Ramirez L."/>
            <person name="Rash S."/>
            <person name="Retterer J."/>
            <person name="Rodriguez A."/>
            <person name="Rogers S."/>
            <person name="Salamov A."/>
            <person name="Salazar A."/>
            <person name="She X."/>
            <person name="Smith D."/>
            <person name="Slezak T."/>
            <person name="Solovyev V."/>
            <person name="Thayer N."/>
            <person name="Tice H."/>
            <person name="Tsai M."/>
            <person name="Ustaszewska A."/>
            <person name="Vo N."/>
            <person name="Wagner M."/>
            <person name="Wheeler J."/>
            <person name="Wu K."/>
            <person name="Xie G."/>
            <person name="Yang J."/>
            <person name="Dubchak I."/>
            <person name="Furey T.S."/>
            <person name="DeJong P."/>
            <person name="Dickson M."/>
            <person name="Gordon D."/>
            <person name="Eichler E.E."/>
            <person name="Pennacchio L.A."/>
            <person name="Richardson P."/>
            <person name="Stubbs L."/>
            <person name="Rokhsar D.S."/>
            <person name="Myers R.M."/>
            <person name="Rubin E.M."/>
            <person name="Lucas S.M."/>
        </authorList>
    </citation>
    <scope>NUCLEOTIDE SEQUENCE [LARGE SCALE GENOMIC DNA]</scope>
</reference>
<reference key="2">
    <citation type="journal article" date="2004" name="Genome Res.">
        <title>The status, quality, and expansion of the NIH full-length cDNA project: the Mammalian Gene Collection (MGC).</title>
        <authorList>
            <consortium name="The MGC Project Team"/>
        </authorList>
    </citation>
    <scope>NUCLEOTIDE SEQUENCE [LARGE SCALE MRNA]</scope>
</reference>
<reference key="3">
    <citation type="journal article" date="2004" name="Proc. Natl. Acad. Sci. U.S.A.">
        <title>The human olfactory receptor gene family.</title>
        <authorList>
            <person name="Malnic B."/>
            <person name="Godfrey P.A."/>
            <person name="Buck L.B."/>
        </authorList>
    </citation>
    <scope>IDENTIFICATION</scope>
</reference>
<reference key="4">
    <citation type="journal article" date="2004" name="Proc. Natl. Acad. Sci. U.S.A.">
        <authorList>
            <person name="Malnic B."/>
            <person name="Godfrey P.A."/>
            <person name="Buck L.B."/>
        </authorList>
    </citation>
    <scope>ERRATUM OF PUBMED:14983052</scope>
</reference>
<name>O7E24_HUMAN</name>
<accession>Q6IFN5</accession>
<accession>B9EJD9</accession>
<accession>Q9UPJ1</accession>
<proteinExistence type="evidence at transcript level"/>
<keyword id="KW-1003">Cell membrane</keyword>
<keyword id="KW-1015">Disulfide bond</keyword>
<keyword id="KW-0297">G-protein coupled receptor</keyword>
<keyword id="KW-0325">Glycoprotein</keyword>
<keyword id="KW-0472">Membrane</keyword>
<keyword id="KW-0552">Olfaction</keyword>
<keyword id="KW-0675">Receptor</keyword>
<keyword id="KW-1185">Reference proteome</keyword>
<keyword id="KW-0716">Sensory transduction</keyword>
<keyword id="KW-0807">Transducer</keyword>
<keyword id="KW-0812">Transmembrane</keyword>
<keyword id="KW-1133">Transmembrane helix</keyword>
<protein>
    <recommendedName>
        <fullName>Olfactory receptor 7E24</fullName>
    </recommendedName>
    <alternativeName>
        <fullName>Olfactory receptor OR19-14</fullName>
    </alternativeName>
</protein>
<evidence type="ECO:0000255" key="1"/>
<evidence type="ECO:0000255" key="2">
    <source>
        <dbReference type="PROSITE-ProRule" id="PRU00521"/>
    </source>
</evidence>
<evidence type="ECO:0000305" key="3"/>
<sequence>MSYFPILFFFFLKRCPSYTEPQNLTGVSEFLLLGLSEDPELQPVLAGLFLSMYLVTVLGNLLIILAVSSDSHLHTPMYFFLSNLSLADIGFTSTTVPKMIVDMQTHSRVISYEGCLTQMSFFVLFACMDDMLLSVMAYDRFVAICHPLHYRIIMNPRLCGFLILLSFFISLLDSQLHNLIMLQLTCFKDVDISNFFCDPSQLLHLRCSDTFINEMVIYFMGAIFGCLPISGILFSYYKIVSPILRVPTSDGKYKAFSTCGSHLAVVCLFYGTGLVGYLSSAVLPSPRKSMVASVMYTVVTPMLNPFIYSLRNKDIQSALCRLHGRIIKSHHLHPFCYMG</sequence>